<comment type="subcellular location">
    <subcellularLocation>
        <location evidence="2">Membrane</location>
        <topology evidence="2">Single-pass membrane protein</topology>
    </subcellularLocation>
</comment>
<organism>
    <name type="scientific">Rickettsia prowazekii (strain Madrid E)</name>
    <dbReference type="NCBI Taxonomy" id="272947"/>
    <lineage>
        <taxon>Bacteria</taxon>
        <taxon>Pseudomonadati</taxon>
        <taxon>Pseudomonadota</taxon>
        <taxon>Alphaproteobacteria</taxon>
        <taxon>Rickettsiales</taxon>
        <taxon>Rickettsiaceae</taxon>
        <taxon>Rickettsieae</taxon>
        <taxon>Rickettsia</taxon>
        <taxon>typhus group</taxon>
    </lineage>
</organism>
<reference key="1">
    <citation type="journal article" date="1998" name="Nature">
        <title>The genome sequence of Rickettsia prowazekii and the origin of mitochondria.</title>
        <authorList>
            <person name="Andersson S.G.E."/>
            <person name="Zomorodipour A."/>
            <person name="Andersson J.O."/>
            <person name="Sicheritz-Ponten T."/>
            <person name="Alsmark U.C.M."/>
            <person name="Podowski R.M."/>
            <person name="Naeslund A.K."/>
            <person name="Eriksson A.-S."/>
            <person name="Winkler H.H."/>
            <person name="Kurland C.G."/>
        </authorList>
    </citation>
    <scope>NUCLEOTIDE SEQUENCE [LARGE SCALE GENOMIC DNA]</scope>
    <source>
        <strain>Madrid E</strain>
    </source>
</reference>
<feature type="chain" id="PRO_0000101367" description="Uncharacterized protein RP420">
    <location>
        <begin position="1"/>
        <end position="167"/>
    </location>
</feature>
<feature type="transmembrane region" description="Helical" evidence="1">
    <location>
        <begin position="4"/>
        <end position="24"/>
    </location>
</feature>
<protein>
    <recommendedName>
        <fullName>Uncharacterized protein RP420</fullName>
    </recommendedName>
</protein>
<keyword id="KW-0472">Membrane</keyword>
<keyword id="KW-1185">Reference proteome</keyword>
<keyword id="KW-0812">Transmembrane</keyword>
<keyword id="KW-1133">Transmembrane helix</keyword>
<evidence type="ECO:0000255" key="1"/>
<evidence type="ECO:0000305" key="2"/>
<sequence length="167" mass="19096">MKKIIGLFFIIILIVINISILAYDYPKAEQEQKWDEVDSIAGEGGLIFRPGRVKNESTKAVGCTVNKYLWQAALEIISFIPLASVDSNGGVIITEWYSPRSNTNFRFKINIFIKDDVISPDAIEVKIFEEILKNKQWVLNENTSNLAIMLEDKILRKARDIYINSVR</sequence>
<name>Y420_RICPR</name>
<proteinExistence type="predicted"/>
<dbReference type="EMBL" id="AJ235271">
    <property type="protein sequence ID" value="CAA14877.1"/>
    <property type="molecule type" value="Genomic_DNA"/>
</dbReference>
<dbReference type="PIR" id="C71700">
    <property type="entry name" value="C71700"/>
</dbReference>
<dbReference type="RefSeq" id="NP_220801.1">
    <property type="nucleotide sequence ID" value="NC_000963.1"/>
</dbReference>
<dbReference type="RefSeq" id="WP_004597618.1">
    <property type="nucleotide sequence ID" value="NC_000963.1"/>
</dbReference>
<dbReference type="SMR" id="Q9ZDB2"/>
<dbReference type="STRING" id="272947.gene:17555500"/>
<dbReference type="EnsemblBacteria" id="CAA14877">
    <property type="protein sequence ID" value="CAA14877"/>
    <property type="gene ID" value="CAA14877"/>
</dbReference>
<dbReference type="KEGG" id="rpr:RP420"/>
<dbReference type="PATRIC" id="fig|272947.5.peg.433"/>
<dbReference type="eggNOG" id="ENOG50315UG">
    <property type="taxonomic scope" value="Bacteria"/>
</dbReference>
<dbReference type="HOGENOM" id="CLU_103320_1_0_5"/>
<dbReference type="OrthoDB" id="8479681at2"/>
<dbReference type="Proteomes" id="UP000002480">
    <property type="component" value="Chromosome"/>
</dbReference>
<dbReference type="GO" id="GO:0016020">
    <property type="term" value="C:membrane"/>
    <property type="evidence" value="ECO:0007669"/>
    <property type="project" value="UniProtKB-SubCell"/>
</dbReference>
<dbReference type="InterPro" id="IPR021959">
    <property type="entry name" value="DUF3576"/>
</dbReference>
<dbReference type="Pfam" id="PF12100">
    <property type="entry name" value="DUF3576"/>
    <property type="match status" value="1"/>
</dbReference>
<gene>
    <name type="ordered locus">RP420</name>
</gene>
<accession>Q9ZDB2</accession>